<proteinExistence type="inferred from homology"/>
<evidence type="ECO:0000255" key="1">
    <source>
        <dbReference type="HAMAP-Rule" id="MF_00432"/>
    </source>
</evidence>
<protein>
    <recommendedName>
        <fullName evidence="1">Cytochrome b6-f complex subunit 5</fullName>
    </recommendedName>
    <alternativeName>
        <fullName evidence="1">Cytochrome b6-f complex subunit PetG</fullName>
    </alternativeName>
    <alternativeName>
        <fullName evidence="1">Cytochrome b6-f complex subunit V</fullName>
    </alternativeName>
</protein>
<comment type="function">
    <text evidence="1">Component of the cytochrome b6-f complex, which mediates electron transfer between photosystem II (PSII) and photosystem I (PSI), cyclic electron flow around PSI, and state transitions. PetG is required for either the stability or assembly of the cytochrome b6-f complex.</text>
</comment>
<comment type="subunit">
    <text evidence="1">The 4 large subunits of the cytochrome b6-f complex are cytochrome b6, subunit IV (17 kDa polypeptide, PetD), cytochrome f and the Rieske protein, while the 4 small subunits are PetG, PetL, PetM and PetN. The complex functions as a dimer.</text>
</comment>
<comment type="subcellular location">
    <subcellularLocation>
        <location evidence="1">Plastid</location>
        <location evidence="1">Chloroplast thylakoid membrane</location>
        <topology evidence="1">Single-pass membrane protein</topology>
    </subcellularLocation>
</comment>
<comment type="similarity">
    <text evidence="1">Belongs to the PetG family.</text>
</comment>
<name>PETG_GUITH</name>
<dbReference type="EMBL" id="AF041468">
    <property type="protein sequence ID" value="AAC35696.1"/>
    <property type="molecule type" value="Genomic_DNA"/>
</dbReference>
<dbReference type="RefSeq" id="NP_050762.1">
    <property type="nucleotide sequence ID" value="NC_000926.1"/>
</dbReference>
<dbReference type="SMR" id="O78505"/>
<dbReference type="GeneID" id="857070"/>
<dbReference type="HOGENOM" id="CLU_216962_0_0_1"/>
<dbReference type="GO" id="GO:0009535">
    <property type="term" value="C:chloroplast thylakoid membrane"/>
    <property type="evidence" value="ECO:0007669"/>
    <property type="project" value="UniProtKB-SubCell"/>
</dbReference>
<dbReference type="GO" id="GO:0009512">
    <property type="term" value="C:cytochrome b6f complex"/>
    <property type="evidence" value="ECO:0007669"/>
    <property type="project" value="InterPro"/>
</dbReference>
<dbReference type="GO" id="GO:0045158">
    <property type="term" value="F:electron transporter, transferring electrons within cytochrome b6/f complex of photosystem II activity"/>
    <property type="evidence" value="ECO:0007669"/>
    <property type="project" value="UniProtKB-UniRule"/>
</dbReference>
<dbReference type="GO" id="GO:0017004">
    <property type="term" value="P:cytochrome complex assembly"/>
    <property type="evidence" value="ECO:0007669"/>
    <property type="project" value="UniProtKB-UniRule"/>
</dbReference>
<dbReference type="GO" id="GO:0015979">
    <property type="term" value="P:photosynthesis"/>
    <property type="evidence" value="ECO:0007669"/>
    <property type="project" value="UniProtKB-KW"/>
</dbReference>
<dbReference type="HAMAP" id="MF_00432">
    <property type="entry name" value="Cytb6_f_PetG"/>
    <property type="match status" value="1"/>
</dbReference>
<dbReference type="InterPro" id="IPR003683">
    <property type="entry name" value="Cyt_6/f_cplx_su5"/>
</dbReference>
<dbReference type="InterPro" id="IPR036099">
    <property type="entry name" value="Cyt_6/f_cplx_su5_sf"/>
</dbReference>
<dbReference type="NCBIfam" id="NF001907">
    <property type="entry name" value="PRK00665.1"/>
    <property type="match status" value="1"/>
</dbReference>
<dbReference type="Pfam" id="PF02529">
    <property type="entry name" value="PetG"/>
    <property type="match status" value="1"/>
</dbReference>
<dbReference type="PIRSF" id="PIRSF000034">
    <property type="entry name" value="Cyt_b6-f_V"/>
    <property type="match status" value="1"/>
</dbReference>
<dbReference type="SUPFAM" id="SSF103446">
    <property type="entry name" value="PetG subunit of the cytochrome b6f complex"/>
    <property type="match status" value="1"/>
</dbReference>
<accession>O78505</accession>
<keyword id="KW-0150">Chloroplast</keyword>
<keyword id="KW-0249">Electron transport</keyword>
<keyword id="KW-0472">Membrane</keyword>
<keyword id="KW-0602">Photosynthesis</keyword>
<keyword id="KW-0934">Plastid</keyword>
<keyword id="KW-0793">Thylakoid</keyword>
<keyword id="KW-0812">Transmembrane</keyword>
<keyword id="KW-1133">Transmembrane helix</keyword>
<keyword id="KW-0813">Transport</keyword>
<geneLocation type="chloroplast"/>
<organism>
    <name type="scientific">Guillardia theta</name>
    <name type="common">Cryptophyte</name>
    <name type="synonym">Cryptomonas phi</name>
    <dbReference type="NCBI Taxonomy" id="55529"/>
    <lineage>
        <taxon>Eukaryota</taxon>
        <taxon>Cryptophyceae</taxon>
        <taxon>Pyrenomonadales</taxon>
        <taxon>Geminigeraceae</taxon>
        <taxon>Guillardia</taxon>
    </lineage>
</organism>
<feature type="chain" id="PRO_0000216384" description="Cytochrome b6-f complex subunit 5">
    <location>
        <begin position="1"/>
        <end position="37"/>
    </location>
</feature>
<feature type="transmembrane region" description="Helical" evidence="1">
    <location>
        <begin position="5"/>
        <end position="25"/>
    </location>
</feature>
<gene>
    <name evidence="1" type="primary">petG</name>
</gene>
<sequence>MIEPLLFGIVLGLIPVTLTGLFVAAYLQYRRGNQFGL</sequence>
<reference key="1">
    <citation type="journal article" date="1999" name="J. Mol. Evol.">
        <title>The plastid genome of the cryptophyte alga, Guillardia theta: complete sequence and conserved synteny groups confirm its common ancestry with red algae.</title>
        <authorList>
            <person name="Douglas S.E."/>
            <person name="Penny S.L."/>
        </authorList>
    </citation>
    <scope>NUCLEOTIDE SEQUENCE [LARGE SCALE GENOMIC DNA]</scope>
</reference>